<protein>
    <recommendedName>
        <fullName evidence="1">Global transcriptional regulator Spx</fullName>
    </recommendedName>
</protein>
<name>SPX_STAEQ</name>
<organism>
    <name type="scientific">Staphylococcus epidermidis (strain ATCC 35984 / DSM 28319 / BCRC 17069 / CCUG 31568 / BM 3577 / RP62A)</name>
    <dbReference type="NCBI Taxonomy" id="176279"/>
    <lineage>
        <taxon>Bacteria</taxon>
        <taxon>Bacillati</taxon>
        <taxon>Bacillota</taxon>
        <taxon>Bacilli</taxon>
        <taxon>Bacillales</taxon>
        <taxon>Staphylococcaceae</taxon>
        <taxon>Staphylococcus</taxon>
    </lineage>
</organism>
<feature type="chain" id="PRO_0000162569" description="Global transcriptional regulator Spx">
    <location>
        <begin position="1"/>
        <end position="131"/>
    </location>
</feature>
<feature type="disulfide bond" description="Redox-active" evidence="1">
    <location>
        <begin position="10"/>
        <end position="13"/>
    </location>
</feature>
<proteinExistence type="inferred from homology"/>
<keyword id="KW-0963">Cytoplasm</keyword>
<keyword id="KW-1015">Disulfide bond</keyword>
<keyword id="KW-0676">Redox-active center</keyword>
<keyword id="KW-1185">Reference proteome</keyword>
<keyword id="KW-0804">Transcription</keyword>
<keyword id="KW-0805">Transcription regulation</keyword>
<evidence type="ECO:0000255" key="1">
    <source>
        <dbReference type="HAMAP-Rule" id="MF_01132"/>
    </source>
</evidence>
<reference key="1">
    <citation type="journal article" date="2005" name="J. Bacteriol.">
        <title>Insights on evolution of virulence and resistance from the complete genome analysis of an early methicillin-resistant Staphylococcus aureus strain and a biofilm-producing methicillin-resistant Staphylococcus epidermidis strain.</title>
        <authorList>
            <person name="Gill S.R."/>
            <person name="Fouts D.E."/>
            <person name="Archer G.L."/>
            <person name="Mongodin E.F."/>
            <person name="DeBoy R.T."/>
            <person name="Ravel J."/>
            <person name="Paulsen I.T."/>
            <person name="Kolonay J.F."/>
            <person name="Brinkac L.M."/>
            <person name="Beanan M.J."/>
            <person name="Dodson R.J."/>
            <person name="Daugherty S.C."/>
            <person name="Madupu R."/>
            <person name="Angiuoli S.V."/>
            <person name="Durkin A.S."/>
            <person name="Haft D.H."/>
            <person name="Vamathevan J.J."/>
            <person name="Khouri H."/>
            <person name="Utterback T.R."/>
            <person name="Lee C."/>
            <person name="Dimitrov G."/>
            <person name="Jiang L."/>
            <person name="Qin H."/>
            <person name="Weidman J."/>
            <person name="Tran K."/>
            <person name="Kang K.H."/>
            <person name="Hance I.R."/>
            <person name="Nelson K.E."/>
            <person name="Fraser C.M."/>
        </authorList>
    </citation>
    <scope>NUCLEOTIDE SEQUENCE [LARGE SCALE GENOMIC DNA]</scope>
    <source>
        <strain>ATCC 35984 / DSM 28319 / BCRC 17069 / CCUG 31568 / BM 3577 / RP62A</strain>
    </source>
</reference>
<accession>Q5HQH3</accession>
<sequence length="131" mass="15424">MVTLFTSPSCTSCRKAKAWLQEHDIPYTERNIFSEHLTIDEIKQILKMTEDGTDEIISTRSKTYQKLNVDIDSLPLQDLYSIIQDNPGLLRRPIILDDKRLQVGYNEDEIRRFLPRKVRTFQLQEAQRLVD</sequence>
<dbReference type="EMBL" id="CP000029">
    <property type="protein sequence ID" value="AAW53978.1"/>
    <property type="molecule type" value="Genomic_DNA"/>
</dbReference>
<dbReference type="SMR" id="Q5HQH3"/>
<dbReference type="STRING" id="176279.SERP0576"/>
<dbReference type="KEGG" id="ser:SERP0576"/>
<dbReference type="eggNOG" id="COG1393">
    <property type="taxonomic scope" value="Bacteria"/>
</dbReference>
<dbReference type="HOGENOM" id="CLU_116644_1_1_9"/>
<dbReference type="Proteomes" id="UP000000531">
    <property type="component" value="Chromosome"/>
</dbReference>
<dbReference type="GO" id="GO:0005737">
    <property type="term" value="C:cytoplasm"/>
    <property type="evidence" value="ECO:0007669"/>
    <property type="project" value="UniProtKB-SubCell"/>
</dbReference>
<dbReference type="GO" id="GO:0045892">
    <property type="term" value="P:negative regulation of DNA-templated transcription"/>
    <property type="evidence" value="ECO:0007669"/>
    <property type="project" value="InterPro"/>
</dbReference>
<dbReference type="CDD" id="cd03032">
    <property type="entry name" value="ArsC_Spx"/>
    <property type="match status" value="1"/>
</dbReference>
<dbReference type="Gene3D" id="3.40.30.10">
    <property type="entry name" value="Glutaredoxin"/>
    <property type="match status" value="1"/>
</dbReference>
<dbReference type="HAMAP" id="MF_01132">
    <property type="entry name" value="Spx"/>
    <property type="match status" value="1"/>
</dbReference>
<dbReference type="InterPro" id="IPR006660">
    <property type="entry name" value="Arsenate_reductase-like"/>
</dbReference>
<dbReference type="InterPro" id="IPR023731">
    <property type="entry name" value="Spx"/>
</dbReference>
<dbReference type="InterPro" id="IPR036249">
    <property type="entry name" value="Thioredoxin-like_sf"/>
</dbReference>
<dbReference type="InterPro" id="IPR006504">
    <property type="entry name" value="Tscrpt_reg_Spx/MgsR"/>
</dbReference>
<dbReference type="NCBIfam" id="TIGR01617">
    <property type="entry name" value="arsC_related"/>
    <property type="match status" value="1"/>
</dbReference>
<dbReference type="NCBIfam" id="NF002459">
    <property type="entry name" value="PRK01655.1"/>
    <property type="match status" value="1"/>
</dbReference>
<dbReference type="NCBIfam" id="NF009210">
    <property type="entry name" value="PRK12559.1"/>
    <property type="match status" value="1"/>
</dbReference>
<dbReference type="PANTHER" id="PTHR30041">
    <property type="entry name" value="ARSENATE REDUCTASE"/>
    <property type="match status" value="1"/>
</dbReference>
<dbReference type="PANTHER" id="PTHR30041:SF7">
    <property type="entry name" value="GLOBAL TRANSCRIPTIONAL REGULATOR SPX"/>
    <property type="match status" value="1"/>
</dbReference>
<dbReference type="Pfam" id="PF03960">
    <property type="entry name" value="ArsC"/>
    <property type="match status" value="1"/>
</dbReference>
<dbReference type="SUPFAM" id="SSF52833">
    <property type="entry name" value="Thioredoxin-like"/>
    <property type="match status" value="1"/>
</dbReference>
<dbReference type="PROSITE" id="PS51353">
    <property type="entry name" value="ARSC"/>
    <property type="match status" value="1"/>
</dbReference>
<comment type="function">
    <text evidence="1">Global transcriptional regulator that plays a key role in stress response and exerts either positive or negative regulation of genes. Acts by interacting with the C-terminal domain of the alpha subunit of the RNA polymerase (RNAP). This interaction can enhance binding of RNAP to the promoter region of target genes and stimulate their transcription, or block interaction of RNAP with activator.</text>
</comment>
<comment type="subunit">
    <text evidence="1">Interacts with the C-terminal domain of the alpha subunit of the RNAP.</text>
</comment>
<comment type="subcellular location">
    <subcellularLocation>
        <location evidence="1">Cytoplasm</location>
    </subcellularLocation>
</comment>
<comment type="similarity">
    <text evidence="1">Belongs to the ArsC family. Spx subfamily.</text>
</comment>
<gene>
    <name evidence="1" type="primary">spx</name>
    <name type="ordered locus">SERP0576</name>
</gene>